<dbReference type="EMBL" id="CP001127">
    <property type="protein sequence ID" value="ACF89800.1"/>
    <property type="molecule type" value="Genomic_DNA"/>
</dbReference>
<dbReference type="RefSeq" id="WP_000828345.1">
    <property type="nucleotide sequence ID" value="NC_011094.1"/>
</dbReference>
<dbReference type="SMR" id="B4TV33"/>
<dbReference type="GeneID" id="66757362"/>
<dbReference type="KEGG" id="sew:SeSA_A3237"/>
<dbReference type="HOGENOM" id="CLU_063829_0_0_6"/>
<dbReference type="Proteomes" id="UP000001865">
    <property type="component" value="Chromosome"/>
</dbReference>
<dbReference type="GO" id="GO:0003677">
    <property type="term" value="F:DNA binding"/>
    <property type="evidence" value="ECO:0007669"/>
    <property type="project" value="UniProtKB-UniRule"/>
</dbReference>
<dbReference type="GO" id="GO:0003700">
    <property type="term" value="F:DNA-binding transcription factor activity"/>
    <property type="evidence" value="ECO:0007669"/>
    <property type="project" value="UniProtKB-UniRule"/>
</dbReference>
<dbReference type="CDD" id="cd08428">
    <property type="entry name" value="PBP2_IciA_ArgP"/>
    <property type="match status" value="1"/>
</dbReference>
<dbReference type="FunFam" id="1.10.10.10:FF:000061">
    <property type="entry name" value="HTH-type transcriptional regulator ArgP"/>
    <property type="match status" value="1"/>
</dbReference>
<dbReference type="FunFam" id="3.40.190.290:FF:000002">
    <property type="entry name" value="HTH-type transcriptional regulator ArgP"/>
    <property type="match status" value="1"/>
</dbReference>
<dbReference type="Gene3D" id="3.40.190.290">
    <property type="match status" value="1"/>
</dbReference>
<dbReference type="Gene3D" id="1.10.10.10">
    <property type="entry name" value="Winged helix-like DNA-binding domain superfamily/Winged helix DNA-binding domain"/>
    <property type="match status" value="1"/>
</dbReference>
<dbReference type="HAMAP" id="MF_00513">
    <property type="entry name" value="HTH_type_ArgP"/>
    <property type="match status" value="1"/>
</dbReference>
<dbReference type="InterPro" id="IPR017685">
    <property type="entry name" value="ArgP"/>
</dbReference>
<dbReference type="InterPro" id="IPR023490">
    <property type="entry name" value="ArgP_gammaproteobact"/>
</dbReference>
<dbReference type="InterPro" id="IPR050176">
    <property type="entry name" value="LTTR"/>
</dbReference>
<dbReference type="InterPro" id="IPR005119">
    <property type="entry name" value="LysR_subst-bd"/>
</dbReference>
<dbReference type="InterPro" id="IPR000847">
    <property type="entry name" value="Tscrpt_reg_HTH_LysR"/>
</dbReference>
<dbReference type="InterPro" id="IPR036388">
    <property type="entry name" value="WH-like_DNA-bd_sf"/>
</dbReference>
<dbReference type="InterPro" id="IPR036390">
    <property type="entry name" value="WH_DNA-bd_sf"/>
</dbReference>
<dbReference type="NCBIfam" id="TIGR03298">
    <property type="entry name" value="argP"/>
    <property type="match status" value="1"/>
</dbReference>
<dbReference type="NCBIfam" id="NF002964">
    <property type="entry name" value="PRK03635.1"/>
    <property type="match status" value="1"/>
</dbReference>
<dbReference type="NCBIfam" id="NF009888">
    <property type="entry name" value="PRK13348.1"/>
    <property type="match status" value="1"/>
</dbReference>
<dbReference type="PANTHER" id="PTHR30579:SF2">
    <property type="entry name" value="HTH-TYPE TRANSCRIPTIONAL REGULATOR ARGP"/>
    <property type="match status" value="1"/>
</dbReference>
<dbReference type="PANTHER" id="PTHR30579">
    <property type="entry name" value="TRANSCRIPTIONAL REGULATOR"/>
    <property type="match status" value="1"/>
</dbReference>
<dbReference type="Pfam" id="PF00126">
    <property type="entry name" value="HTH_1"/>
    <property type="match status" value="1"/>
</dbReference>
<dbReference type="Pfam" id="PF03466">
    <property type="entry name" value="LysR_substrate"/>
    <property type="match status" value="1"/>
</dbReference>
<dbReference type="PRINTS" id="PR00039">
    <property type="entry name" value="HTHLYSR"/>
</dbReference>
<dbReference type="SUPFAM" id="SSF53850">
    <property type="entry name" value="Periplasmic binding protein-like II"/>
    <property type="match status" value="1"/>
</dbReference>
<dbReference type="SUPFAM" id="SSF46785">
    <property type="entry name" value="Winged helix' DNA-binding domain"/>
    <property type="match status" value="1"/>
</dbReference>
<dbReference type="PROSITE" id="PS50931">
    <property type="entry name" value="HTH_LYSR"/>
    <property type="match status" value="1"/>
</dbReference>
<protein>
    <recommendedName>
        <fullName evidence="1">HTH-type transcriptional regulator ArgP</fullName>
    </recommendedName>
</protein>
<reference key="1">
    <citation type="journal article" date="2011" name="J. Bacteriol.">
        <title>Comparative genomics of 28 Salmonella enterica isolates: evidence for CRISPR-mediated adaptive sublineage evolution.</title>
        <authorList>
            <person name="Fricke W.F."/>
            <person name="Mammel M.K."/>
            <person name="McDermott P.F."/>
            <person name="Tartera C."/>
            <person name="White D.G."/>
            <person name="Leclerc J.E."/>
            <person name="Ravel J."/>
            <person name="Cebula T.A."/>
        </authorList>
    </citation>
    <scope>NUCLEOTIDE SEQUENCE [LARGE SCALE GENOMIC DNA]</scope>
    <source>
        <strain>CVM19633</strain>
    </source>
</reference>
<accession>B4TV33</accession>
<organism>
    <name type="scientific">Salmonella schwarzengrund (strain CVM19633)</name>
    <dbReference type="NCBI Taxonomy" id="439843"/>
    <lineage>
        <taxon>Bacteria</taxon>
        <taxon>Pseudomonadati</taxon>
        <taxon>Pseudomonadota</taxon>
        <taxon>Gammaproteobacteria</taxon>
        <taxon>Enterobacterales</taxon>
        <taxon>Enterobacteriaceae</taxon>
        <taxon>Salmonella</taxon>
    </lineage>
</organism>
<name>ARGP_SALSV</name>
<feature type="chain" id="PRO_1000127285" description="HTH-type transcriptional regulator ArgP">
    <location>
        <begin position="1"/>
        <end position="297"/>
    </location>
</feature>
<feature type="domain" description="HTH lysR-type" evidence="1">
    <location>
        <begin position="4"/>
        <end position="60"/>
    </location>
</feature>
<feature type="DNA-binding region" description="H-T-H motif" evidence="1">
    <location>
        <begin position="21"/>
        <end position="40"/>
    </location>
</feature>
<gene>
    <name evidence="1" type="primary">argP</name>
    <name type="synonym">iciA</name>
    <name type="ordered locus">SeSA_A3237</name>
</gene>
<evidence type="ECO:0000255" key="1">
    <source>
        <dbReference type="HAMAP-Rule" id="MF_00513"/>
    </source>
</evidence>
<evidence type="ECO:0000305" key="2"/>
<comment type="function">
    <text evidence="1">Controls the transcription of genes involved in arginine and lysine metabolism.</text>
</comment>
<comment type="subunit">
    <text evidence="1">Homodimer.</text>
</comment>
<comment type="similarity">
    <text evidence="2">Belongs to the LysR transcriptional regulatory family.</text>
</comment>
<keyword id="KW-0238">DNA-binding</keyword>
<keyword id="KW-0804">Transcription</keyword>
<keyword id="KW-0805">Transcription regulation</keyword>
<proteinExistence type="inferred from homology"/>
<sequence>MKRPDYRTLQALDAVIRERGFERAAQKLCITQSAVSQRIKQLENMFGQPLLVRTVPPRPTEQGQKLLALLRQVELLEEEWLGDEQTGSTPLLLSLAVNADSLATWLLPALAPVLADSPIRLNLQVEDETRTQERLRRGEVVGAVSIQHQALPSCLVDKLGALDYLFVASKPFAERYFPNGVTRSSLLKAPAVAFDHLDDMHQAFLQQNFDLPPGSVPCHIVNSSEAFVQLARQGTTCCMIPHLQIEKELESGELINLTPGLLQRRMLYWHRFAPESRMMRKVTDALLEYGHKVLRQD</sequence>